<feature type="chain" id="PRO_0000056809" description="Choline/ethanolaminephosphotransferase 1">
    <location>
        <begin position="1"/>
        <end position="391"/>
    </location>
</feature>
<feature type="topological domain" description="Lumenal" evidence="1">
    <location>
        <begin position="1"/>
        <end position="49"/>
    </location>
</feature>
<feature type="transmembrane region" description="Helical" evidence="1">
    <location>
        <begin position="50"/>
        <end position="69"/>
    </location>
</feature>
<feature type="topological domain" description="Cytoplasmic" evidence="1">
    <location>
        <begin position="70"/>
        <end position="172"/>
    </location>
</feature>
<feature type="transmembrane region" description="Helical" evidence="1">
    <location>
        <begin position="173"/>
        <end position="193"/>
    </location>
</feature>
<feature type="topological domain" description="Lumenal" evidence="1">
    <location>
        <begin position="194"/>
        <end position="211"/>
    </location>
</feature>
<feature type="transmembrane region" description="Helical" evidence="1">
    <location>
        <begin position="212"/>
        <end position="232"/>
    </location>
</feature>
<feature type="topological domain" description="Cytoplasmic" evidence="1">
    <location>
        <begin position="233"/>
        <end position="264"/>
    </location>
</feature>
<feature type="transmembrane region" description="Helical" evidence="1">
    <location>
        <begin position="265"/>
        <end position="282"/>
    </location>
</feature>
<feature type="topological domain" description="Lumenal" evidence="1">
    <location>
        <begin position="283"/>
        <end position="285"/>
    </location>
</feature>
<feature type="transmembrane region" description="Helical" evidence="1">
    <location>
        <begin position="286"/>
        <end position="308"/>
    </location>
</feature>
<feature type="topological domain" description="Cytoplasmic" evidence="1">
    <location>
        <begin position="309"/>
        <end position="321"/>
    </location>
</feature>
<feature type="transmembrane region" description="Helical" evidence="1">
    <location>
        <begin position="322"/>
        <end position="342"/>
    </location>
</feature>
<feature type="topological domain" description="Lumenal" evidence="1">
    <location>
        <begin position="343"/>
        <end position="346"/>
    </location>
</feature>
<feature type="transmembrane region" description="Helical" evidence="1">
    <location>
        <begin position="347"/>
        <end position="367"/>
    </location>
</feature>
<feature type="topological domain" description="Cytoplasmic" evidence="1">
    <location>
        <begin position="368"/>
        <end position="391"/>
    </location>
</feature>
<feature type="sequence conflict" description="In Ref. 1; AAA63572." evidence="8" ref="1">
    <original>D</original>
    <variation>V</variation>
    <location>
        <position position="96"/>
    </location>
</feature>
<feature type="sequence conflict" description="In Ref. 1; AAA63572." evidence="8" ref="1">
    <original>C</original>
    <variation>S</variation>
    <location>
        <position position="98"/>
    </location>
</feature>
<proteinExistence type="evidence at protein level"/>
<keyword id="KW-0333">Golgi apparatus</keyword>
<keyword id="KW-0444">Lipid biosynthesis</keyword>
<keyword id="KW-0443">Lipid metabolism</keyword>
<keyword id="KW-0472">Membrane</keyword>
<keyword id="KW-0511">Multifunctional enzyme</keyword>
<keyword id="KW-0594">Phospholipid biosynthesis</keyword>
<keyword id="KW-1208">Phospholipid metabolism</keyword>
<keyword id="KW-1185">Reference proteome</keyword>
<keyword id="KW-0808">Transferase</keyword>
<keyword id="KW-0812">Transmembrane</keyword>
<keyword id="KW-1133">Transmembrane helix</keyword>
<organism>
    <name type="scientific">Saccharomyces cerevisiae (strain ATCC 204508 / S288c)</name>
    <name type="common">Baker's yeast</name>
    <dbReference type="NCBI Taxonomy" id="559292"/>
    <lineage>
        <taxon>Eukaryota</taxon>
        <taxon>Fungi</taxon>
        <taxon>Dikarya</taxon>
        <taxon>Ascomycota</taxon>
        <taxon>Saccharomycotina</taxon>
        <taxon>Saccharomycetes</taxon>
        <taxon>Saccharomycetales</taxon>
        <taxon>Saccharomycetaceae</taxon>
        <taxon>Saccharomyces</taxon>
    </lineage>
</organism>
<reference key="1">
    <citation type="journal article" date="1991" name="J. Biol. Chem.">
        <title>sn-1,2-diacylglycerol choline- and ethanolaminephosphotransferases in Saccharomyces cerevisiae. Nucleotide sequence of the EPT1 gene and comparison of the CPT1 and EPT1 gene products.</title>
        <authorList>
            <person name="Hjelmstad R.H."/>
            <person name="Bell R.M."/>
        </authorList>
    </citation>
    <scope>NUCLEOTIDE SEQUENCE [GENOMIC DNA]</scope>
    <source>
        <strain>ATCC 204660 / DBY746</strain>
    </source>
</reference>
<reference key="2">
    <citation type="journal article" date="1994" name="Science">
        <title>Complete nucleotide sequence of Saccharomyces cerevisiae chromosome VIII.</title>
        <authorList>
            <person name="Johnston M."/>
            <person name="Andrews S."/>
            <person name="Brinkman R."/>
            <person name="Cooper J."/>
            <person name="Ding H."/>
            <person name="Dover J."/>
            <person name="Du Z."/>
            <person name="Favello A."/>
            <person name="Fulton L."/>
            <person name="Gattung S."/>
            <person name="Geisel C."/>
            <person name="Kirsten J."/>
            <person name="Kucaba T."/>
            <person name="Hillier L.W."/>
            <person name="Jier M."/>
            <person name="Johnston L."/>
            <person name="Langston Y."/>
            <person name="Latreille P."/>
            <person name="Louis E.J."/>
            <person name="Macri C."/>
            <person name="Mardis E."/>
            <person name="Menezes S."/>
            <person name="Mouser L."/>
            <person name="Nhan M."/>
            <person name="Rifkin L."/>
            <person name="Riles L."/>
            <person name="St Peter H."/>
            <person name="Trevaskis E."/>
            <person name="Vaughan K."/>
            <person name="Vignati D."/>
            <person name="Wilcox L."/>
            <person name="Wohldman P."/>
            <person name="Waterston R."/>
            <person name="Wilson R."/>
            <person name="Vaudin M."/>
        </authorList>
    </citation>
    <scope>NUCLEOTIDE SEQUENCE [LARGE SCALE GENOMIC DNA]</scope>
    <source>
        <strain>ATCC 204508 / S288c</strain>
    </source>
</reference>
<reference key="3">
    <citation type="journal article" date="2014" name="G3 (Bethesda)">
        <title>The reference genome sequence of Saccharomyces cerevisiae: Then and now.</title>
        <authorList>
            <person name="Engel S.R."/>
            <person name="Dietrich F.S."/>
            <person name="Fisk D.G."/>
            <person name="Binkley G."/>
            <person name="Balakrishnan R."/>
            <person name="Costanzo M.C."/>
            <person name="Dwight S.S."/>
            <person name="Hitz B.C."/>
            <person name="Karra K."/>
            <person name="Nash R.S."/>
            <person name="Weng S."/>
            <person name="Wong E.D."/>
            <person name="Lloyd P."/>
            <person name="Skrzypek M.S."/>
            <person name="Miyasato S.R."/>
            <person name="Simison M."/>
            <person name="Cherry J.M."/>
        </authorList>
    </citation>
    <scope>GENOME REANNOTATION</scope>
    <source>
        <strain>ATCC 204508 / S288c</strain>
    </source>
</reference>
<reference key="4">
    <citation type="journal article" date="1988" name="J. Biol. Chem.">
        <title>The sn-1,2-diacylglycerol ethanolaminephosphotransferase activity of Saccharomyces cerevisiae. Isolation of mutants and cloning of the EPT1 gene.</title>
        <authorList>
            <person name="Hjelmstad R.H."/>
            <person name="Bell R.M."/>
        </authorList>
    </citation>
    <scope>FUNCTION</scope>
</reference>
<reference key="5">
    <citation type="journal article" date="1991" name="J. Biol. Chem.">
        <title>sn-1,2-diacylglycerol choline- and ethanolaminephosphotransferases in Saccharomyces cerevisiae. Mixed micellar analysis of the CPT1 and EPT1 gene products.</title>
        <authorList>
            <person name="Hjelmstad R.H."/>
            <person name="Bell R.M."/>
        </authorList>
    </citation>
    <scope>CATALYTIC ACTIVITY</scope>
    <scope>FUNCTION</scope>
    <scope>COFACTOR</scope>
    <scope>ACTIVITY REGULATION</scope>
    <scope>BIOPHYSICOCHEMICAL PROPERTIES</scope>
</reference>
<reference key="6">
    <citation type="journal article" date="1994" name="J. Bacteriol.">
        <title>Functional redundancy of CDP-ethanolamine and CDP-choline pathway enzymes in phospholipid biosynthesis: ethanolamine-dependent effects on steady-state membrane phospholipid composition in Saccharomyces cerevisiae.</title>
        <authorList>
            <person name="McGee T.P."/>
            <person name="Skinner H.B."/>
            <person name="Bankaitis V.A."/>
        </authorList>
    </citation>
    <scope>FUNCTION</scope>
</reference>
<reference key="7">
    <citation type="journal article" date="1994" name="J. Biol. Chem.">
        <title>Phosphatidylcholine biosynthesis in Saccharomyces cerevisiae. Regulatory insights from studies employing null and chimeric sn-1,2-diacylglycerol choline- and ethanolaminephosphotransferases.</title>
        <authorList>
            <person name="McMaster C.R."/>
            <person name="Bell R.M."/>
        </authorList>
    </citation>
    <scope>FUNCTION</scope>
</reference>
<reference key="8">
    <citation type="journal article" date="1994" name="J. Biol. Chem.">
        <title>Studies employing Saccharomyces cerevisiae cpt1 and ept1 null mutants implicate the CPT1 gene in coordinate regulation of phospholipid biosynthesis.</title>
        <authorList>
            <person name="Morash S.C."/>
            <person name="McMaster C.R."/>
            <person name="Hjelmstad R.H."/>
            <person name="Bell R.M."/>
        </authorList>
    </citation>
    <scope>INDUCTION</scope>
</reference>
<reference key="9">
    <citation type="journal article" date="2004" name="FEBS Lett.">
        <title>The selective utilization of substrates in vivo by the phosphatidylethanolamine and phosphatidylcholine biosynthetic enzymes Ept1p and Cpt1p in yeast.</title>
        <authorList>
            <person name="Boumann H.A."/>
            <person name="de Kruijff B."/>
            <person name="Heck A.J."/>
            <person name="de Kroon A.I."/>
        </authorList>
    </citation>
    <scope>FUNCTION</scope>
    <scope>CATALYTIC ACTIVITY</scope>
    <scope>SUBSTRATE SPECIFICITY</scope>
</reference>
<accession>P22140</accession>
<accession>D3DL73</accession>
<comment type="function">
    <text evidence="2 3 4 5 6">Catalyzes the final step in the CDP-ethanolamine route leading to phosphatidylethanolamine (PE). Can also catalyze the formation of phosphatidylcholine (PC) from CDP-choline, but does not substantially contribute to PC biosynthesis. Preferentially uses CDP-dimethylethanolamine and CDP-propanolamine as aminoalcohol substrates. Shows highest activity toward di-unsaturated diacylglycerol species as lipid substrates. The CDP-ethanolamine pathway may play a role in maintaining the proper PE species distribution.</text>
</comment>
<comment type="catalytic activity">
    <reaction evidence="2 3">
        <text>CDP-ethanolamine + a 1,2-diacyl-sn-glycerol = a 1,2-diacyl-sn-glycero-3-phosphoethanolamine + CMP + H(+)</text>
        <dbReference type="Rhea" id="RHEA:32943"/>
        <dbReference type="ChEBI" id="CHEBI:15378"/>
        <dbReference type="ChEBI" id="CHEBI:17815"/>
        <dbReference type="ChEBI" id="CHEBI:57876"/>
        <dbReference type="ChEBI" id="CHEBI:60377"/>
        <dbReference type="ChEBI" id="CHEBI:64612"/>
        <dbReference type="EC" id="2.7.8.1"/>
    </reaction>
</comment>
<comment type="catalytic activity">
    <reaction evidence="2 3">
        <text>CDP-choline + a 1,2-diacyl-sn-glycerol = a 1,2-diacyl-sn-glycero-3-phosphocholine + CMP + H(+)</text>
        <dbReference type="Rhea" id="RHEA:32939"/>
        <dbReference type="ChEBI" id="CHEBI:15378"/>
        <dbReference type="ChEBI" id="CHEBI:17815"/>
        <dbReference type="ChEBI" id="CHEBI:57643"/>
        <dbReference type="ChEBI" id="CHEBI:58779"/>
        <dbReference type="ChEBI" id="CHEBI:60377"/>
        <dbReference type="EC" id="2.7.8.2"/>
    </reaction>
</comment>
<comment type="catalytic activity">
    <reaction evidence="3">
        <text>CDP-N-methylethanolamine + a 1,2-diacyl-sn-glycerol = a 1,2-diacyl-sn-glycero-3-phospho-N-methylethanolamine + CMP + H(+)</text>
        <dbReference type="Rhea" id="RHEA:33771"/>
        <dbReference type="ChEBI" id="CHEBI:15378"/>
        <dbReference type="ChEBI" id="CHEBI:17815"/>
        <dbReference type="ChEBI" id="CHEBI:57547"/>
        <dbReference type="ChEBI" id="CHEBI:60377"/>
        <dbReference type="ChEBI" id="CHEBI:64573"/>
    </reaction>
    <physiologicalReaction direction="left-to-right" evidence="9">
        <dbReference type="Rhea" id="RHEA:33772"/>
    </physiologicalReaction>
</comment>
<comment type="catalytic activity">
    <reaction evidence="3">
        <text>CDP-N,N-dimethylethanolamine + a 1,2-diacyl-sn-glycerol = a 1,2-diacyl-sn-glycero-3-phospho-N,N-dimethylethanolamine + CMP + H(+)</text>
        <dbReference type="Rhea" id="RHEA:33775"/>
        <dbReference type="ChEBI" id="CHEBI:15378"/>
        <dbReference type="ChEBI" id="CHEBI:17815"/>
        <dbReference type="ChEBI" id="CHEBI:60377"/>
        <dbReference type="ChEBI" id="CHEBI:64572"/>
        <dbReference type="ChEBI" id="CHEBI:65117"/>
    </reaction>
    <physiologicalReaction direction="left-to-right" evidence="9">
        <dbReference type="Rhea" id="RHEA:33776"/>
    </physiologicalReaction>
</comment>
<comment type="catalytic activity">
    <reaction evidence="3">
        <text>1,2-di-(9Z-octadecenoyl)-glycerol + CDP-choline = 1,2-di-(9Z-octadecenoyl)-sn-glycero-3-phosphocholine + CMP + H(+)</text>
        <dbReference type="Rhea" id="RHEA:44288"/>
        <dbReference type="ChEBI" id="CHEBI:15378"/>
        <dbReference type="ChEBI" id="CHEBI:52323"/>
        <dbReference type="ChEBI" id="CHEBI:58779"/>
        <dbReference type="ChEBI" id="CHEBI:60377"/>
        <dbReference type="ChEBI" id="CHEBI:74669"/>
    </reaction>
    <physiologicalReaction direction="left-to-right" evidence="9">
        <dbReference type="Rhea" id="RHEA:44289"/>
    </physiologicalReaction>
</comment>
<comment type="catalytic activity">
    <reaction evidence="3">
        <text>1,2-di-(9Z-octadecenoyl)-glycerol + CDP-ethanolamine = 1,2-di-(9Z-octadecenoyl)-sn-glycero-3-phosphoethanolamine + CMP + H(+)</text>
        <dbReference type="Rhea" id="RHEA:44292"/>
        <dbReference type="ChEBI" id="CHEBI:15378"/>
        <dbReference type="ChEBI" id="CHEBI:52323"/>
        <dbReference type="ChEBI" id="CHEBI:57876"/>
        <dbReference type="ChEBI" id="CHEBI:60377"/>
        <dbReference type="ChEBI" id="CHEBI:74986"/>
    </reaction>
    <physiologicalReaction direction="left-to-right" evidence="9">
        <dbReference type="Rhea" id="RHEA:44293"/>
    </physiologicalReaction>
</comment>
<comment type="cofactor">
    <cofactor evidence="3">
        <name>Mg(2+)</name>
        <dbReference type="ChEBI" id="CHEBI:18420"/>
    </cofactor>
</comment>
<comment type="activity regulation">
    <text evidence="3">Requires a divalent cation activator, and is inhibited by CMP. Activated by phospholipids, especially phosphatidylcholine.</text>
</comment>
<comment type="biophysicochemical properties">
    <kinetics>
        <KM evidence="3">120 uM for CDP-choline</KM>
        <KM evidence="3">29 uM for CDP-dimethylethanolamine</KM>
        <KM evidence="3">29 uM for CDP-monomethylethanolamine</KM>
        <KM evidence="3">22 uM for CDP-ethanolamine</KM>
        <Vmax evidence="3">0.62 nmol/min/mg enzyme for CDP-choline</Vmax>
        <Vmax evidence="3">0.42 nmol/min/mg enzyme for CDP-dimethylethanolamine</Vmax>
        <Vmax evidence="3">0.27 nmol/min/mg enzyme for CDP-monomethylethanolamine</Vmax>
        <Vmax evidence="3">1.35 nmol/min/mg enzyme for CDP-ethanolamine</Vmax>
    </kinetics>
</comment>
<comment type="pathway">
    <text>Phospholipid metabolism; phosphatidylethanolamine biosynthesis; phosphatidylethanolamine from ethanolamine: step 3/3.</text>
</comment>
<comment type="pathway">
    <text>Phospholipid metabolism; phosphatidylcholine biosynthesis; phosphatidylcholine from phosphocholine: step 2/2.</text>
</comment>
<comment type="interaction">
    <interactant intactId="EBI-6494">
        <id>P22140</id>
    </interactant>
    <interactant intactId="EBI-2050738">
        <id>P17898</id>
        <label>CPT1</label>
    </interactant>
    <organismsDiffer>false</organismsDiffer>
    <experiments>5</experiments>
</comment>
<comment type="subcellular location">
    <subcellularLocation>
        <location>Golgi apparatus membrane</location>
        <topology>Multi-pass membrane protein</topology>
    </subcellularLocation>
</comment>
<comment type="induction">
    <text evidence="7">Repressed by inositol. Repression is dependent on the presence of CPT1.</text>
</comment>
<comment type="similarity">
    <text evidence="8">Belongs to the CDP-alcohol phosphatidyltransferase class-I family.</text>
</comment>
<gene>
    <name type="primary">EPT1</name>
    <name type="ordered locus">YHR123W</name>
</gene>
<name>EPT1_YEAST</name>
<evidence type="ECO:0000255" key="1"/>
<evidence type="ECO:0000269" key="2">
    <source>
    </source>
</evidence>
<evidence type="ECO:0000269" key="3">
    <source>
    </source>
</evidence>
<evidence type="ECO:0000269" key="4">
    <source>
    </source>
</evidence>
<evidence type="ECO:0000269" key="5">
    <source>
    </source>
</evidence>
<evidence type="ECO:0000269" key="6">
    <source>
    </source>
</evidence>
<evidence type="ECO:0000269" key="7">
    <source>
    </source>
</evidence>
<evidence type="ECO:0000305" key="8"/>
<evidence type="ECO:0000305" key="9">
    <source>
    </source>
</evidence>
<sequence>MGYFVPDSHIENLKSYKYQSEDRSLVSKYFLKPFWQRFCHIFPTWMAPNIITLSGFAFIVINVLTVFYYDPNLNTDTPRWTYFSYALGVFLYQTFDGCDGVHARRINQSGPLGELFDHSIDAINSTLSIFIFASETGMGFSYNLMLSQFAMLTNFYLSTWEEYHTHTLYLSEFSGPVEGILIVCVSLILTGIYGKQVIWHTYLFTITVGDKVIDVDTLDIVFSLAVFGLVMNALSAKRNVDKYYRNSTSSANNITQIEQDSAIKGLLPFFAYYASIALLVWMQPSFITLSFILSVGFTGAFTVGRIIVCHLTKQSFPMFNAPMLIPLCQIVLYKICLSLWGIESNKIVFALSWLGFGLSLGVHIMFMNDIIHEFTEYLDVYALSIKRSKLT</sequence>
<dbReference type="EC" id="2.7.8.1" evidence="2 3"/>
<dbReference type="EC" id="2.7.8.2" evidence="2 3"/>
<dbReference type="EMBL" id="M59311">
    <property type="protein sequence ID" value="AAA63572.1"/>
    <property type="molecule type" value="Genomic_DNA"/>
</dbReference>
<dbReference type="EMBL" id="U10398">
    <property type="protein sequence ID" value="AAB68409.1"/>
    <property type="molecule type" value="Genomic_DNA"/>
</dbReference>
<dbReference type="EMBL" id="BK006934">
    <property type="protein sequence ID" value="DAA06817.1"/>
    <property type="molecule type" value="Genomic_DNA"/>
</dbReference>
<dbReference type="PIR" id="S48967">
    <property type="entry name" value="S48967"/>
</dbReference>
<dbReference type="RefSeq" id="NP_011991.1">
    <property type="nucleotide sequence ID" value="NM_001179253.1"/>
</dbReference>
<dbReference type="SMR" id="P22140"/>
<dbReference type="BioGRID" id="36556">
    <property type="interactions" value="108"/>
</dbReference>
<dbReference type="DIP" id="DIP-5619N"/>
<dbReference type="FunCoup" id="P22140">
    <property type="interactions" value="532"/>
</dbReference>
<dbReference type="IntAct" id="P22140">
    <property type="interactions" value="20"/>
</dbReference>
<dbReference type="MINT" id="P22140"/>
<dbReference type="STRING" id="4932.YHR123W"/>
<dbReference type="SwissLipids" id="SLP:000000068"/>
<dbReference type="PaxDb" id="4932-YHR123W"/>
<dbReference type="PeptideAtlas" id="P22140"/>
<dbReference type="EnsemblFungi" id="YHR123W_mRNA">
    <property type="protein sequence ID" value="YHR123W"/>
    <property type="gene ID" value="YHR123W"/>
</dbReference>
<dbReference type="GeneID" id="856523"/>
<dbReference type="KEGG" id="sce:YHR123W"/>
<dbReference type="AGR" id="SGD:S000001165"/>
<dbReference type="SGD" id="S000001165">
    <property type="gene designation" value="EPT1"/>
</dbReference>
<dbReference type="VEuPathDB" id="FungiDB:YHR123W"/>
<dbReference type="eggNOG" id="KOG2877">
    <property type="taxonomic scope" value="Eukaryota"/>
</dbReference>
<dbReference type="GeneTree" id="ENSGT00950000183117"/>
<dbReference type="HOGENOM" id="CLU_035066_5_2_1"/>
<dbReference type="InParanoid" id="P22140"/>
<dbReference type="OMA" id="FITRQIC"/>
<dbReference type="OrthoDB" id="196717at2759"/>
<dbReference type="BioCyc" id="YEAST:YHR123W-MONOMER"/>
<dbReference type="Reactome" id="R-SCE-1483191">
    <property type="pathway name" value="Synthesis of PC"/>
</dbReference>
<dbReference type="Reactome" id="R-SCE-1483213">
    <property type="pathway name" value="Synthesis of PE"/>
</dbReference>
<dbReference type="SABIO-RK" id="P22140"/>
<dbReference type="UniPathway" id="UPA00558">
    <property type="reaction ID" value="UER00743"/>
</dbReference>
<dbReference type="UniPathway" id="UPA00753">
    <property type="reaction ID" value="UER00740"/>
</dbReference>
<dbReference type="BioGRID-ORCS" id="856523">
    <property type="hits" value="1 hit in 10 CRISPR screens"/>
</dbReference>
<dbReference type="PRO" id="PR:P22140"/>
<dbReference type="Proteomes" id="UP000002311">
    <property type="component" value="Chromosome VIII"/>
</dbReference>
<dbReference type="RNAct" id="P22140">
    <property type="molecule type" value="protein"/>
</dbReference>
<dbReference type="GO" id="GO:0005783">
    <property type="term" value="C:endoplasmic reticulum"/>
    <property type="evidence" value="ECO:0007005"/>
    <property type="project" value="SGD"/>
</dbReference>
<dbReference type="GO" id="GO:0005794">
    <property type="term" value="C:Golgi apparatus"/>
    <property type="evidence" value="ECO:0007005"/>
    <property type="project" value="SGD"/>
</dbReference>
<dbReference type="GO" id="GO:0000139">
    <property type="term" value="C:Golgi membrane"/>
    <property type="evidence" value="ECO:0007669"/>
    <property type="project" value="UniProtKB-SubCell"/>
</dbReference>
<dbReference type="GO" id="GO:0004142">
    <property type="term" value="F:diacylglycerol cholinephosphotransferase activity"/>
    <property type="evidence" value="ECO:0000314"/>
    <property type="project" value="SGD"/>
</dbReference>
<dbReference type="GO" id="GO:0004307">
    <property type="term" value="F:ethanolaminephosphotransferase activity"/>
    <property type="evidence" value="ECO:0000314"/>
    <property type="project" value="SGD"/>
</dbReference>
<dbReference type="GO" id="GO:0006656">
    <property type="term" value="P:phosphatidylcholine biosynthetic process"/>
    <property type="evidence" value="ECO:0000314"/>
    <property type="project" value="SGD"/>
</dbReference>
<dbReference type="GO" id="GO:0006646">
    <property type="term" value="P:phosphatidylethanolamine biosynthetic process"/>
    <property type="evidence" value="ECO:0000314"/>
    <property type="project" value="SGD"/>
</dbReference>
<dbReference type="FunFam" id="1.20.120.1760:FF:000012">
    <property type="entry name" value="sn-1,2-diacylglycerol cholinephosphotransferase"/>
    <property type="match status" value="1"/>
</dbReference>
<dbReference type="Gene3D" id="1.20.120.1760">
    <property type="match status" value="1"/>
</dbReference>
<dbReference type="InterPro" id="IPR000462">
    <property type="entry name" value="CDP-OH_P_trans"/>
</dbReference>
<dbReference type="InterPro" id="IPR043130">
    <property type="entry name" value="CDP-OH_PTrfase_TM_dom"/>
</dbReference>
<dbReference type="InterPro" id="IPR048254">
    <property type="entry name" value="CDP_ALCOHOL_P_TRANSF_CS"/>
</dbReference>
<dbReference type="InterPro" id="IPR014472">
    <property type="entry name" value="CHOPT"/>
</dbReference>
<dbReference type="PANTHER" id="PTHR10414:SF37">
    <property type="entry name" value="BB IN A BOXCAR, ISOFORM C"/>
    <property type="match status" value="1"/>
</dbReference>
<dbReference type="PANTHER" id="PTHR10414">
    <property type="entry name" value="ETHANOLAMINEPHOSPHOTRANSFERASE"/>
    <property type="match status" value="1"/>
</dbReference>
<dbReference type="Pfam" id="PF01066">
    <property type="entry name" value="CDP-OH_P_transf"/>
    <property type="match status" value="1"/>
</dbReference>
<dbReference type="PIRSF" id="PIRSF015665">
    <property type="entry name" value="CHOPT"/>
    <property type="match status" value="1"/>
</dbReference>
<dbReference type="PROSITE" id="PS00379">
    <property type="entry name" value="CDP_ALCOHOL_P_TRANSF"/>
    <property type="match status" value="1"/>
</dbReference>
<protein>
    <recommendedName>
        <fullName>Choline/ethanolaminephosphotransferase 1</fullName>
        <shortName>ETHPT</shortName>
        <shortName>Ethanolaminephosphotransferase 1</shortName>
        <ecNumber evidence="2 3">2.7.8.1</ecNumber>
        <ecNumber evidence="2 3">2.7.8.2</ecNumber>
    </recommendedName>
    <alternativeName>
        <fullName>Aminoalcohol phosphotransferase EPT1</fullName>
    </alternativeName>
</protein>